<dbReference type="EC" id="2.4.2.9"/>
<dbReference type="EMBL" id="CU329670">
    <property type="protein sequence ID" value="CAB11230.1"/>
    <property type="molecule type" value="Genomic_DNA"/>
</dbReference>
<dbReference type="PIR" id="T38019">
    <property type="entry name" value="T38019"/>
</dbReference>
<dbReference type="RefSeq" id="NP_594785.1">
    <property type="nucleotide sequence ID" value="NM_001020213.2"/>
</dbReference>
<dbReference type="SMR" id="O13867"/>
<dbReference type="BioGRID" id="278970">
    <property type="interactions" value="3"/>
</dbReference>
<dbReference type="FunCoup" id="O13867">
    <property type="interactions" value="174"/>
</dbReference>
<dbReference type="STRING" id="284812.O13867"/>
<dbReference type="PaxDb" id="4896-SPAC1B3.01c.1"/>
<dbReference type="EnsemblFungi" id="SPAC1B3.01c.1">
    <property type="protein sequence ID" value="SPAC1B3.01c.1:pep"/>
    <property type="gene ID" value="SPAC1B3.01c"/>
</dbReference>
<dbReference type="KEGG" id="spo:2542512"/>
<dbReference type="PomBase" id="SPAC1B3.01c"/>
<dbReference type="VEuPathDB" id="FungiDB:SPAC1B3.01c"/>
<dbReference type="eggNOG" id="KOG4203">
    <property type="taxonomic scope" value="Eukaryota"/>
</dbReference>
<dbReference type="HOGENOM" id="CLU_067096_1_1_1"/>
<dbReference type="InParanoid" id="O13867"/>
<dbReference type="OMA" id="KHKIGLM"/>
<dbReference type="PhylomeDB" id="O13867"/>
<dbReference type="UniPathway" id="UPA00574">
    <property type="reaction ID" value="UER00636"/>
</dbReference>
<dbReference type="PRO" id="PR:O13867"/>
<dbReference type="Proteomes" id="UP000002485">
    <property type="component" value="Chromosome I"/>
</dbReference>
<dbReference type="GO" id="GO:0005829">
    <property type="term" value="C:cytosol"/>
    <property type="evidence" value="ECO:0007005"/>
    <property type="project" value="PomBase"/>
</dbReference>
<dbReference type="GO" id="GO:0005634">
    <property type="term" value="C:nucleus"/>
    <property type="evidence" value="ECO:0007005"/>
    <property type="project" value="PomBase"/>
</dbReference>
<dbReference type="GO" id="GO:0005525">
    <property type="term" value="F:GTP binding"/>
    <property type="evidence" value="ECO:0007669"/>
    <property type="project" value="UniProtKB-KW"/>
</dbReference>
<dbReference type="GO" id="GO:0004845">
    <property type="term" value="F:uracil phosphoribosyltransferase activity"/>
    <property type="evidence" value="ECO:0000266"/>
    <property type="project" value="PomBase"/>
</dbReference>
<dbReference type="GO" id="GO:0044206">
    <property type="term" value="P:UMP salvage"/>
    <property type="evidence" value="ECO:0007669"/>
    <property type="project" value="UniProtKB-UniPathway"/>
</dbReference>
<dbReference type="GO" id="GO:0006223">
    <property type="term" value="P:uracil salvage"/>
    <property type="evidence" value="ECO:0000305"/>
    <property type="project" value="PomBase"/>
</dbReference>
<dbReference type="CDD" id="cd06223">
    <property type="entry name" value="PRTases_typeI"/>
    <property type="match status" value="1"/>
</dbReference>
<dbReference type="FunFam" id="3.40.50.2020:FF:000023">
    <property type="entry name" value="Probable uracil phosphoribosyltransferase"/>
    <property type="match status" value="1"/>
</dbReference>
<dbReference type="Gene3D" id="3.40.50.2020">
    <property type="match status" value="1"/>
</dbReference>
<dbReference type="InterPro" id="IPR000836">
    <property type="entry name" value="PRibTrfase_dom"/>
</dbReference>
<dbReference type="InterPro" id="IPR029057">
    <property type="entry name" value="PRTase-like"/>
</dbReference>
<dbReference type="NCBIfam" id="NF001097">
    <property type="entry name" value="PRK00129.1"/>
    <property type="match status" value="1"/>
</dbReference>
<dbReference type="Pfam" id="PF14681">
    <property type="entry name" value="UPRTase"/>
    <property type="match status" value="1"/>
</dbReference>
<dbReference type="SUPFAM" id="SSF53271">
    <property type="entry name" value="PRTase-like"/>
    <property type="match status" value="1"/>
</dbReference>
<feature type="chain" id="PRO_0000120786" description="Uracil phosphoribosyltransferase 1">
    <location>
        <begin position="1"/>
        <end position="219"/>
    </location>
</feature>
<feature type="binding site" evidence="2">
    <location>
        <position position="33"/>
    </location>
    <ligand>
        <name>GTP</name>
        <dbReference type="ChEBI" id="CHEBI:37565"/>
    </ligand>
</feature>
<feature type="binding site" evidence="2">
    <location>
        <position position="42"/>
    </location>
    <ligand>
        <name>GTP</name>
        <dbReference type="ChEBI" id="CHEBI:37565"/>
    </ligand>
</feature>
<feature type="binding site" evidence="2">
    <location>
        <begin position="76"/>
        <end position="79"/>
    </location>
    <ligand>
        <name>GTP</name>
        <dbReference type="ChEBI" id="CHEBI:37565"/>
    </ligand>
</feature>
<feature type="binding site" evidence="2">
    <location>
        <position position="86"/>
    </location>
    <ligand>
        <name>5-phospho-alpha-D-ribose 1-diphosphate</name>
        <dbReference type="ChEBI" id="CHEBI:58017"/>
    </ligand>
</feature>
<feature type="binding site" evidence="2">
    <location>
        <position position="103"/>
    </location>
    <ligand>
        <name>GTP</name>
        <dbReference type="ChEBI" id="CHEBI:37565"/>
    </ligand>
</feature>
<feature type="binding site" evidence="2">
    <location>
        <position position="111"/>
    </location>
    <ligand>
        <name>5-phospho-alpha-D-ribose 1-diphosphate</name>
        <dbReference type="ChEBI" id="CHEBI:58017"/>
    </ligand>
</feature>
<feature type="binding site" evidence="2">
    <location>
        <position position="132"/>
    </location>
    <ligand>
        <name>GTP</name>
        <dbReference type="ChEBI" id="CHEBI:37565"/>
    </ligand>
</feature>
<feature type="binding site" evidence="2">
    <location>
        <begin position="138"/>
        <end position="146"/>
    </location>
    <ligand>
        <name>5-phospho-alpha-D-ribose 1-diphosphate</name>
        <dbReference type="ChEBI" id="CHEBI:58017"/>
    </ligand>
</feature>
<feature type="binding site" evidence="2">
    <location>
        <position position="138"/>
    </location>
    <ligand>
        <name>5-phospho-alpha-D-ribose 1-diphosphate</name>
        <dbReference type="ChEBI" id="CHEBI:58017"/>
    </ligand>
</feature>
<feature type="binding site" evidence="1">
    <location>
        <position position="202"/>
    </location>
    <ligand>
        <name>D-ribose 5-phosphate</name>
        <dbReference type="ChEBI" id="CHEBI:78346"/>
    </ligand>
</feature>
<feature type="binding site" evidence="2">
    <location>
        <position position="203"/>
    </location>
    <ligand>
        <name>uracil</name>
        <dbReference type="ChEBI" id="CHEBI:17568"/>
    </ligand>
</feature>
<feature type="binding site" evidence="2">
    <location>
        <begin position="208"/>
        <end position="210"/>
    </location>
    <ligand>
        <name>uracil</name>
        <dbReference type="ChEBI" id="CHEBI:17568"/>
    </ligand>
</feature>
<feature type="binding site" evidence="2">
    <location>
        <position position="209"/>
    </location>
    <ligand>
        <name>5-phospho-alpha-D-ribose 1-diphosphate</name>
        <dbReference type="ChEBI" id="CHEBI:58017"/>
    </ligand>
</feature>
<sequence>MSLVPEHGNVYVLNQTNQLKGLFTIIRDKTKPRSEFIFYANRIIRLIVEEGLNHLPVSSAKVTTAQNAEYEGVMFDGRICGVSIMRAGESMEQGLRECCRSVRIGKILIQRDEETHKPVLHYIKLPEDISKRYVLLLDPMLATGGSAICAMEILINMGCKQEQIIFLNVIASPEGLKNVHDRFPNIRIVTAVIDEGLDNNGYIVPGLGDFGDIYFGTKA</sequence>
<accession>O13867</accession>
<proteinExistence type="inferred from homology"/>
<comment type="function">
    <text evidence="1">Catalyzes the conversion of uracil and 5-phospho-alpha-D-ribose 1-diphosphate (PRPP) to UMP and diphosphate.</text>
</comment>
<comment type="catalytic activity">
    <reaction>
        <text>UMP + diphosphate = 5-phospho-alpha-D-ribose 1-diphosphate + uracil</text>
        <dbReference type="Rhea" id="RHEA:13017"/>
        <dbReference type="ChEBI" id="CHEBI:17568"/>
        <dbReference type="ChEBI" id="CHEBI:33019"/>
        <dbReference type="ChEBI" id="CHEBI:57865"/>
        <dbReference type="ChEBI" id="CHEBI:58017"/>
        <dbReference type="EC" id="2.4.2.9"/>
    </reaction>
</comment>
<comment type="cofactor">
    <cofactor evidence="1">
        <name>Mg(2+)</name>
        <dbReference type="ChEBI" id="CHEBI:18420"/>
    </cofactor>
    <text evidence="1">Binds 1 Mg(2+) ion per subunit. The magnesium is bound as Mg-PRPP.</text>
</comment>
<comment type="activity regulation">
    <text evidence="1">Allosterically activated by GTP.</text>
</comment>
<comment type="pathway">
    <text>Pyrimidine metabolism; UMP biosynthesis via salvage pathway; UMP from uracil: step 1/1.</text>
</comment>
<comment type="similarity">
    <text evidence="3">Belongs to the UPRTase family.</text>
</comment>
<gene>
    <name type="ORF">SPAC1B3.01c</name>
</gene>
<keyword id="KW-0021">Allosteric enzyme</keyword>
<keyword id="KW-0328">Glycosyltransferase</keyword>
<keyword id="KW-0342">GTP-binding</keyword>
<keyword id="KW-0547">Nucleotide-binding</keyword>
<keyword id="KW-1185">Reference proteome</keyword>
<keyword id="KW-0808">Transferase</keyword>
<protein>
    <recommendedName>
        <fullName>Uracil phosphoribosyltransferase 1</fullName>
        <shortName>UPRTase 1</shortName>
        <ecNumber>2.4.2.9</ecNumber>
    </recommendedName>
    <alternativeName>
        <fullName>UMP pyrophosphorylase 1</fullName>
    </alternativeName>
</protein>
<name>UPP1_SCHPO</name>
<organism>
    <name type="scientific">Schizosaccharomyces pombe (strain 972 / ATCC 24843)</name>
    <name type="common">Fission yeast</name>
    <dbReference type="NCBI Taxonomy" id="284812"/>
    <lineage>
        <taxon>Eukaryota</taxon>
        <taxon>Fungi</taxon>
        <taxon>Dikarya</taxon>
        <taxon>Ascomycota</taxon>
        <taxon>Taphrinomycotina</taxon>
        <taxon>Schizosaccharomycetes</taxon>
        <taxon>Schizosaccharomycetales</taxon>
        <taxon>Schizosaccharomycetaceae</taxon>
        <taxon>Schizosaccharomyces</taxon>
    </lineage>
</organism>
<reference key="1">
    <citation type="journal article" date="2002" name="Nature">
        <title>The genome sequence of Schizosaccharomyces pombe.</title>
        <authorList>
            <person name="Wood V."/>
            <person name="Gwilliam R."/>
            <person name="Rajandream M.A."/>
            <person name="Lyne M.H."/>
            <person name="Lyne R."/>
            <person name="Stewart A."/>
            <person name="Sgouros J.G."/>
            <person name="Peat N."/>
            <person name="Hayles J."/>
            <person name="Baker S.G."/>
            <person name="Basham D."/>
            <person name="Bowman S."/>
            <person name="Brooks K."/>
            <person name="Brown D."/>
            <person name="Brown S."/>
            <person name="Chillingworth T."/>
            <person name="Churcher C.M."/>
            <person name="Collins M."/>
            <person name="Connor R."/>
            <person name="Cronin A."/>
            <person name="Davis P."/>
            <person name="Feltwell T."/>
            <person name="Fraser A."/>
            <person name="Gentles S."/>
            <person name="Goble A."/>
            <person name="Hamlin N."/>
            <person name="Harris D.E."/>
            <person name="Hidalgo J."/>
            <person name="Hodgson G."/>
            <person name="Holroyd S."/>
            <person name="Hornsby T."/>
            <person name="Howarth S."/>
            <person name="Huckle E.J."/>
            <person name="Hunt S."/>
            <person name="Jagels K."/>
            <person name="James K.D."/>
            <person name="Jones L."/>
            <person name="Jones M."/>
            <person name="Leather S."/>
            <person name="McDonald S."/>
            <person name="McLean J."/>
            <person name="Mooney P."/>
            <person name="Moule S."/>
            <person name="Mungall K.L."/>
            <person name="Murphy L.D."/>
            <person name="Niblett D."/>
            <person name="Odell C."/>
            <person name="Oliver K."/>
            <person name="O'Neil S."/>
            <person name="Pearson D."/>
            <person name="Quail M.A."/>
            <person name="Rabbinowitsch E."/>
            <person name="Rutherford K.M."/>
            <person name="Rutter S."/>
            <person name="Saunders D."/>
            <person name="Seeger K."/>
            <person name="Sharp S."/>
            <person name="Skelton J."/>
            <person name="Simmonds M.N."/>
            <person name="Squares R."/>
            <person name="Squares S."/>
            <person name="Stevens K."/>
            <person name="Taylor K."/>
            <person name="Taylor R.G."/>
            <person name="Tivey A."/>
            <person name="Walsh S.V."/>
            <person name="Warren T."/>
            <person name="Whitehead S."/>
            <person name="Woodward J.R."/>
            <person name="Volckaert G."/>
            <person name="Aert R."/>
            <person name="Robben J."/>
            <person name="Grymonprez B."/>
            <person name="Weltjens I."/>
            <person name="Vanstreels E."/>
            <person name="Rieger M."/>
            <person name="Schaefer M."/>
            <person name="Mueller-Auer S."/>
            <person name="Gabel C."/>
            <person name="Fuchs M."/>
            <person name="Duesterhoeft A."/>
            <person name="Fritzc C."/>
            <person name="Holzer E."/>
            <person name="Moestl D."/>
            <person name="Hilbert H."/>
            <person name="Borzym K."/>
            <person name="Langer I."/>
            <person name="Beck A."/>
            <person name="Lehrach H."/>
            <person name="Reinhardt R."/>
            <person name="Pohl T.M."/>
            <person name="Eger P."/>
            <person name="Zimmermann W."/>
            <person name="Wedler H."/>
            <person name="Wambutt R."/>
            <person name="Purnelle B."/>
            <person name="Goffeau A."/>
            <person name="Cadieu E."/>
            <person name="Dreano S."/>
            <person name="Gloux S."/>
            <person name="Lelaure V."/>
            <person name="Mottier S."/>
            <person name="Galibert F."/>
            <person name="Aves S.J."/>
            <person name="Xiang Z."/>
            <person name="Hunt C."/>
            <person name="Moore K."/>
            <person name="Hurst S.M."/>
            <person name="Lucas M."/>
            <person name="Rochet M."/>
            <person name="Gaillardin C."/>
            <person name="Tallada V.A."/>
            <person name="Garzon A."/>
            <person name="Thode G."/>
            <person name="Daga R.R."/>
            <person name="Cruzado L."/>
            <person name="Jimenez J."/>
            <person name="Sanchez M."/>
            <person name="del Rey F."/>
            <person name="Benito J."/>
            <person name="Dominguez A."/>
            <person name="Revuelta J.L."/>
            <person name="Moreno S."/>
            <person name="Armstrong J."/>
            <person name="Forsburg S.L."/>
            <person name="Cerutti L."/>
            <person name="Lowe T."/>
            <person name="McCombie W.R."/>
            <person name="Paulsen I."/>
            <person name="Potashkin J."/>
            <person name="Shpakovski G.V."/>
            <person name="Ussery D."/>
            <person name="Barrell B.G."/>
            <person name="Nurse P."/>
        </authorList>
    </citation>
    <scope>NUCLEOTIDE SEQUENCE [LARGE SCALE GENOMIC DNA]</scope>
    <source>
        <strain>972 / ATCC 24843</strain>
    </source>
</reference>
<evidence type="ECO:0000250" key="1"/>
<evidence type="ECO:0000250" key="2">
    <source>
        <dbReference type="UniProtKB" id="Q26998"/>
    </source>
</evidence>
<evidence type="ECO:0000305" key="3"/>